<accession>O03889</accession>
<name>COX2_APTAU</name>
<proteinExistence type="inferred from homology"/>
<sequence length="199" mass="22374">AICSLVLYLLTLMLMEKLSSNSVDAQEVELVWTILPAIVLILLALPSLQILYMMDEIDEPDLTLKAIGHQWYWTYEYTDFKDLSFDSYMIPTSELPLGHFRLLEVDHRVVVPMESPIRVIITAGDVLHSWAVPTLGVKTDAIPGRLNQTSFITTRPGIFYGQCSEICGANHSYMPIVVESTPLPHFENWSSLLSTSSSL</sequence>
<evidence type="ECO:0000250" key="1">
    <source>
        <dbReference type="UniProtKB" id="P00403"/>
    </source>
</evidence>
<evidence type="ECO:0000250" key="2">
    <source>
        <dbReference type="UniProtKB" id="P00410"/>
    </source>
</evidence>
<evidence type="ECO:0000250" key="3">
    <source>
        <dbReference type="UniProtKB" id="P68530"/>
    </source>
</evidence>
<evidence type="ECO:0000305" key="4"/>
<keyword id="KW-0186">Copper</keyword>
<keyword id="KW-0249">Electron transport</keyword>
<keyword id="KW-0460">Magnesium</keyword>
<keyword id="KW-0472">Membrane</keyword>
<keyword id="KW-0479">Metal-binding</keyword>
<keyword id="KW-0496">Mitochondrion</keyword>
<keyword id="KW-0999">Mitochondrion inner membrane</keyword>
<keyword id="KW-0679">Respiratory chain</keyword>
<keyword id="KW-1278">Translocase</keyword>
<keyword id="KW-0812">Transmembrane</keyword>
<keyword id="KW-1133">Transmembrane helix</keyword>
<keyword id="KW-0813">Transport</keyword>
<organism>
    <name type="scientific">Apteryx australis</name>
    <name type="common">Southern brown kiwi</name>
    <dbReference type="NCBI Taxonomy" id="8822"/>
    <lineage>
        <taxon>Eukaryota</taxon>
        <taxon>Metazoa</taxon>
        <taxon>Chordata</taxon>
        <taxon>Craniata</taxon>
        <taxon>Vertebrata</taxon>
        <taxon>Euteleostomi</taxon>
        <taxon>Archelosauria</taxon>
        <taxon>Archosauria</taxon>
        <taxon>Dinosauria</taxon>
        <taxon>Saurischia</taxon>
        <taxon>Theropoda</taxon>
        <taxon>Coelurosauria</taxon>
        <taxon>Aves</taxon>
        <taxon>Palaeognathae</taxon>
        <taxon>Apterygiformes</taxon>
        <taxon>Apterygidae</taxon>
        <taxon>Apteryx</taxon>
    </lineage>
</organism>
<comment type="function">
    <text evidence="2">Component of the cytochrome c oxidase, the last enzyme in the mitochondrial electron transport chain which drives oxidative phosphorylation. The respiratory chain contains 3 multisubunit complexes succinate dehydrogenase (complex II, CII), ubiquinol-cytochrome c oxidoreductase (cytochrome b-c1 complex, complex III, CIII) and cytochrome c oxidase (complex IV, CIV), that cooperate to transfer electrons derived from NADH and succinate to molecular oxygen, creating an electrochemical gradient over the inner membrane that drives transmembrane transport and the ATP synthase. Cytochrome c oxidase is the component of the respiratory chain that catalyzes the reduction of oxygen to water. Electrons originating from reduced cytochrome c in the intermembrane space (IMS) are transferred via the dinuclear copper A center (CU(A)) of subunit 2 and heme A of subunit 1 to the active site in subunit 1, a binuclear center (BNC) formed by heme A3 and copper B (CU(B)). The BNC reduces molecular oxygen to 2 water molecules using 4 electrons from cytochrome c in the IMS and 4 protons from the mitochondrial matrix.</text>
</comment>
<comment type="catalytic activity">
    <reaction evidence="2">
        <text>4 Fe(II)-[cytochrome c] + O2 + 8 H(+)(in) = 4 Fe(III)-[cytochrome c] + 2 H2O + 4 H(+)(out)</text>
        <dbReference type="Rhea" id="RHEA:11436"/>
        <dbReference type="Rhea" id="RHEA-COMP:10350"/>
        <dbReference type="Rhea" id="RHEA-COMP:14399"/>
        <dbReference type="ChEBI" id="CHEBI:15377"/>
        <dbReference type="ChEBI" id="CHEBI:15378"/>
        <dbReference type="ChEBI" id="CHEBI:15379"/>
        <dbReference type="ChEBI" id="CHEBI:29033"/>
        <dbReference type="ChEBI" id="CHEBI:29034"/>
        <dbReference type="EC" id="7.1.1.9"/>
    </reaction>
    <physiologicalReaction direction="left-to-right" evidence="2">
        <dbReference type="Rhea" id="RHEA:11437"/>
    </physiologicalReaction>
</comment>
<comment type="cofactor">
    <cofactor evidence="3">
        <name>Cu cation</name>
        <dbReference type="ChEBI" id="CHEBI:23378"/>
    </cofactor>
    <text evidence="3">Binds a dinuclear copper A center per subunit.</text>
</comment>
<comment type="subunit">
    <text evidence="1 3">Component of the cytochrome c oxidase (complex IV, CIV), a multisubunit enzyme composed of 14 subunits. The complex is composed of a catalytic core of 3 subunits MT-CO1, MT-CO2 and MT-CO3, encoded in the mitochondrial DNA, and 11 supernumerary subunits COX4I, COX5A, COX5B, COX6A, COX6B, COX6C, COX7A, COX7B, COX7C, COX8 and NDUFA4, which are encoded in the nuclear genome. The complex exists as a monomer or a dimer and forms supercomplexes (SCs) in the inner mitochondrial membrane with NADH-ubiquinone oxidoreductase (complex I, CI) and ubiquinol-cytochrome c oxidoreductase (cytochrome b-c1 complex, complex III, CIII), resulting in different assemblies (supercomplex SCI(1)III(2)IV(1) and megacomplex MCI(2)III(2)IV(2)) (By similarity). Found in a complex with TMEM177, COA6, COX18, COX20, SCO1 and SCO2. Interacts with TMEM177 in a COX20-dependent manner. Interacts with COX20. Interacts with COX16 (By similarity).</text>
</comment>
<comment type="subcellular location">
    <subcellularLocation>
        <location evidence="3">Mitochondrion inner membrane</location>
        <topology evidence="3">Multi-pass membrane protein</topology>
    </subcellularLocation>
</comment>
<comment type="similarity">
    <text evidence="4">Belongs to the cytochrome c oxidase subunit 2 family.</text>
</comment>
<feature type="chain" id="PRO_0000183501" description="Cytochrome c oxidase subunit 2">
    <location>
        <begin position="1" status="less than"/>
        <end position="199"/>
    </location>
</feature>
<feature type="transmembrane region" description="Helical; Name=I" evidence="3">
    <location>
        <begin position="1" status="less than"/>
        <end position="13"/>
    </location>
</feature>
<feature type="topological domain" description="Mitochondrial matrix" evidence="3">
    <location>
        <begin position="14"/>
        <end position="26"/>
    </location>
</feature>
<feature type="transmembrane region" description="Helical; Name=II" evidence="3">
    <location>
        <begin position="27"/>
        <end position="54"/>
    </location>
</feature>
<feature type="topological domain" description="Mitochondrial intermembrane" evidence="3">
    <location>
        <begin position="55"/>
        <end position="199"/>
    </location>
</feature>
<feature type="binding site" evidence="3">
    <location>
        <position position="128"/>
    </location>
    <ligand>
        <name>Cu cation</name>
        <dbReference type="ChEBI" id="CHEBI:23378"/>
        <label>A1</label>
    </ligand>
</feature>
<feature type="binding site" evidence="3">
    <location>
        <position position="163"/>
    </location>
    <ligand>
        <name>Cu cation</name>
        <dbReference type="ChEBI" id="CHEBI:23378"/>
        <label>A1</label>
    </ligand>
</feature>
<feature type="binding site" evidence="3">
    <location>
        <position position="163"/>
    </location>
    <ligand>
        <name>Cu cation</name>
        <dbReference type="ChEBI" id="CHEBI:23378"/>
        <label>A2</label>
    </ligand>
</feature>
<feature type="binding site" evidence="3">
    <location>
        <position position="165"/>
    </location>
    <ligand>
        <name>Cu cation</name>
        <dbReference type="ChEBI" id="CHEBI:23378"/>
        <label>A2</label>
    </ligand>
</feature>
<feature type="binding site" evidence="3">
    <location>
        <position position="165"/>
    </location>
    <ligand>
        <name>Mg(2+)</name>
        <dbReference type="ChEBI" id="CHEBI:18420"/>
        <note>ligand shared with MT-CO1</note>
    </ligand>
</feature>
<feature type="binding site" evidence="3">
    <location>
        <position position="167"/>
    </location>
    <ligand>
        <name>Cu cation</name>
        <dbReference type="ChEBI" id="CHEBI:23378"/>
        <label>A1</label>
    </ligand>
</feature>
<feature type="binding site" evidence="3">
    <location>
        <position position="167"/>
    </location>
    <ligand>
        <name>Cu cation</name>
        <dbReference type="ChEBI" id="CHEBI:23378"/>
        <label>A2</label>
    </ligand>
</feature>
<feature type="binding site" evidence="3">
    <location>
        <position position="171"/>
    </location>
    <ligand>
        <name>Cu cation</name>
        <dbReference type="ChEBI" id="CHEBI:23378"/>
        <label>A2</label>
    </ligand>
</feature>
<feature type="binding site" evidence="3">
    <location>
        <position position="174"/>
    </location>
    <ligand>
        <name>Cu cation</name>
        <dbReference type="ChEBI" id="CHEBI:23378"/>
        <label>A1</label>
    </ligand>
</feature>
<feature type="non-terminal residue">
    <location>
        <position position="1"/>
    </location>
</feature>
<geneLocation type="mitochondrion"/>
<gene>
    <name type="primary">MT-CO2</name>
    <name type="synonym">COII</name>
    <name type="synonym">COXII</name>
    <name type="synonym">MTCO2</name>
</gene>
<reference key="1">
    <citation type="book" date="1997" name="Avian molecular evolution and systematics">
        <title>Phylogenetic relationships of the ratite birds: resolving conflicts between molecular and morphological data sets.</title>
        <editorList>
            <person name="Mindell D.P."/>
        </editorList>
        <authorList>
            <person name="Lee K."/>
            <person name="Feinstein J."/>
            <person name="Cracraft J."/>
        </authorList>
    </citation>
    <scope>NUCLEOTIDE SEQUENCE [GENOMIC DNA]</scope>
</reference>
<dbReference type="EC" id="7.1.1.9"/>
<dbReference type="EMBL" id="U76064">
    <property type="protein sequence ID" value="AAB61314.1"/>
    <property type="molecule type" value="Genomic_DNA"/>
</dbReference>
<dbReference type="SMR" id="O03889"/>
<dbReference type="GO" id="GO:0005743">
    <property type="term" value="C:mitochondrial inner membrane"/>
    <property type="evidence" value="ECO:0007669"/>
    <property type="project" value="UniProtKB-SubCell"/>
</dbReference>
<dbReference type="GO" id="GO:0045277">
    <property type="term" value="C:respiratory chain complex IV"/>
    <property type="evidence" value="ECO:0000250"/>
    <property type="project" value="UniProtKB"/>
</dbReference>
<dbReference type="GO" id="GO:0005507">
    <property type="term" value="F:copper ion binding"/>
    <property type="evidence" value="ECO:0007669"/>
    <property type="project" value="InterPro"/>
</dbReference>
<dbReference type="GO" id="GO:0004129">
    <property type="term" value="F:cytochrome-c oxidase activity"/>
    <property type="evidence" value="ECO:0007669"/>
    <property type="project" value="UniProtKB-EC"/>
</dbReference>
<dbReference type="GO" id="GO:0042773">
    <property type="term" value="P:ATP synthesis coupled electron transport"/>
    <property type="evidence" value="ECO:0007669"/>
    <property type="project" value="TreeGrafter"/>
</dbReference>
<dbReference type="CDD" id="cd13912">
    <property type="entry name" value="CcO_II_C"/>
    <property type="match status" value="1"/>
</dbReference>
<dbReference type="FunFam" id="2.60.40.420:FF:000001">
    <property type="entry name" value="Cytochrome c oxidase subunit 2"/>
    <property type="match status" value="1"/>
</dbReference>
<dbReference type="Gene3D" id="1.10.287.90">
    <property type="match status" value="1"/>
</dbReference>
<dbReference type="Gene3D" id="2.60.40.420">
    <property type="entry name" value="Cupredoxins - blue copper proteins"/>
    <property type="match status" value="1"/>
</dbReference>
<dbReference type="InterPro" id="IPR045187">
    <property type="entry name" value="CcO_II"/>
</dbReference>
<dbReference type="InterPro" id="IPR002429">
    <property type="entry name" value="CcO_II-like_C"/>
</dbReference>
<dbReference type="InterPro" id="IPR034210">
    <property type="entry name" value="CcO_II_C"/>
</dbReference>
<dbReference type="InterPro" id="IPR001505">
    <property type="entry name" value="Copper_CuA"/>
</dbReference>
<dbReference type="InterPro" id="IPR008972">
    <property type="entry name" value="Cupredoxin"/>
</dbReference>
<dbReference type="InterPro" id="IPR014222">
    <property type="entry name" value="Cyt_c_oxidase_su2"/>
</dbReference>
<dbReference type="InterPro" id="IPR011759">
    <property type="entry name" value="Cyt_c_oxidase_su2_TM_dom"/>
</dbReference>
<dbReference type="InterPro" id="IPR036257">
    <property type="entry name" value="Cyt_c_oxidase_su2_TM_sf"/>
</dbReference>
<dbReference type="NCBIfam" id="TIGR02866">
    <property type="entry name" value="CoxB"/>
    <property type="match status" value="1"/>
</dbReference>
<dbReference type="PANTHER" id="PTHR22888:SF9">
    <property type="entry name" value="CYTOCHROME C OXIDASE SUBUNIT 2"/>
    <property type="match status" value="1"/>
</dbReference>
<dbReference type="PANTHER" id="PTHR22888">
    <property type="entry name" value="CYTOCHROME C OXIDASE, SUBUNIT II"/>
    <property type="match status" value="1"/>
</dbReference>
<dbReference type="Pfam" id="PF00116">
    <property type="entry name" value="COX2"/>
    <property type="match status" value="1"/>
</dbReference>
<dbReference type="Pfam" id="PF02790">
    <property type="entry name" value="COX2_TM"/>
    <property type="match status" value="1"/>
</dbReference>
<dbReference type="PRINTS" id="PR01166">
    <property type="entry name" value="CYCOXIDASEII"/>
</dbReference>
<dbReference type="SUPFAM" id="SSF49503">
    <property type="entry name" value="Cupredoxins"/>
    <property type="match status" value="1"/>
</dbReference>
<dbReference type="SUPFAM" id="SSF81464">
    <property type="entry name" value="Cytochrome c oxidase subunit II-like, transmembrane region"/>
    <property type="match status" value="1"/>
</dbReference>
<dbReference type="PROSITE" id="PS00078">
    <property type="entry name" value="COX2"/>
    <property type="match status" value="1"/>
</dbReference>
<dbReference type="PROSITE" id="PS50857">
    <property type="entry name" value="COX2_CUA"/>
    <property type="match status" value="1"/>
</dbReference>
<dbReference type="PROSITE" id="PS50999">
    <property type="entry name" value="COX2_TM"/>
    <property type="match status" value="1"/>
</dbReference>
<protein>
    <recommendedName>
        <fullName>Cytochrome c oxidase subunit 2</fullName>
        <ecNumber>7.1.1.9</ecNumber>
    </recommendedName>
    <alternativeName>
        <fullName>Cytochrome c oxidase polypeptide II</fullName>
    </alternativeName>
</protein>